<gene>
    <name evidence="9" type="primary">Rnf139</name>
</gene>
<reference evidence="8" key="1">
    <citation type="journal article" date="2005" name="Science">
        <title>The transcriptional landscape of the mammalian genome.</title>
        <authorList>
            <person name="Carninci P."/>
            <person name="Kasukawa T."/>
            <person name="Katayama S."/>
            <person name="Gough J."/>
            <person name="Frith M.C."/>
            <person name="Maeda N."/>
            <person name="Oyama R."/>
            <person name="Ravasi T."/>
            <person name="Lenhard B."/>
            <person name="Wells C."/>
            <person name="Kodzius R."/>
            <person name="Shimokawa K."/>
            <person name="Bajic V.B."/>
            <person name="Brenner S.E."/>
            <person name="Batalov S."/>
            <person name="Forrest A.R."/>
            <person name="Zavolan M."/>
            <person name="Davis M.J."/>
            <person name="Wilming L.G."/>
            <person name="Aidinis V."/>
            <person name="Allen J.E."/>
            <person name="Ambesi-Impiombato A."/>
            <person name="Apweiler R."/>
            <person name="Aturaliya R.N."/>
            <person name="Bailey T.L."/>
            <person name="Bansal M."/>
            <person name="Baxter L."/>
            <person name="Beisel K.W."/>
            <person name="Bersano T."/>
            <person name="Bono H."/>
            <person name="Chalk A.M."/>
            <person name="Chiu K.P."/>
            <person name="Choudhary V."/>
            <person name="Christoffels A."/>
            <person name="Clutterbuck D.R."/>
            <person name="Crowe M.L."/>
            <person name="Dalla E."/>
            <person name="Dalrymple B.P."/>
            <person name="de Bono B."/>
            <person name="Della Gatta G."/>
            <person name="di Bernardo D."/>
            <person name="Down T."/>
            <person name="Engstrom P."/>
            <person name="Fagiolini M."/>
            <person name="Faulkner G."/>
            <person name="Fletcher C.F."/>
            <person name="Fukushima T."/>
            <person name="Furuno M."/>
            <person name="Futaki S."/>
            <person name="Gariboldi M."/>
            <person name="Georgii-Hemming P."/>
            <person name="Gingeras T.R."/>
            <person name="Gojobori T."/>
            <person name="Green R.E."/>
            <person name="Gustincich S."/>
            <person name="Harbers M."/>
            <person name="Hayashi Y."/>
            <person name="Hensch T.K."/>
            <person name="Hirokawa N."/>
            <person name="Hill D."/>
            <person name="Huminiecki L."/>
            <person name="Iacono M."/>
            <person name="Ikeo K."/>
            <person name="Iwama A."/>
            <person name="Ishikawa T."/>
            <person name="Jakt M."/>
            <person name="Kanapin A."/>
            <person name="Katoh M."/>
            <person name="Kawasawa Y."/>
            <person name="Kelso J."/>
            <person name="Kitamura H."/>
            <person name="Kitano H."/>
            <person name="Kollias G."/>
            <person name="Krishnan S.P."/>
            <person name="Kruger A."/>
            <person name="Kummerfeld S.K."/>
            <person name="Kurochkin I.V."/>
            <person name="Lareau L.F."/>
            <person name="Lazarevic D."/>
            <person name="Lipovich L."/>
            <person name="Liu J."/>
            <person name="Liuni S."/>
            <person name="McWilliam S."/>
            <person name="Madan Babu M."/>
            <person name="Madera M."/>
            <person name="Marchionni L."/>
            <person name="Matsuda H."/>
            <person name="Matsuzawa S."/>
            <person name="Miki H."/>
            <person name="Mignone F."/>
            <person name="Miyake S."/>
            <person name="Morris K."/>
            <person name="Mottagui-Tabar S."/>
            <person name="Mulder N."/>
            <person name="Nakano N."/>
            <person name="Nakauchi H."/>
            <person name="Ng P."/>
            <person name="Nilsson R."/>
            <person name="Nishiguchi S."/>
            <person name="Nishikawa S."/>
            <person name="Nori F."/>
            <person name="Ohara O."/>
            <person name="Okazaki Y."/>
            <person name="Orlando V."/>
            <person name="Pang K.C."/>
            <person name="Pavan W.J."/>
            <person name="Pavesi G."/>
            <person name="Pesole G."/>
            <person name="Petrovsky N."/>
            <person name="Piazza S."/>
            <person name="Reed J."/>
            <person name="Reid J.F."/>
            <person name="Ring B.Z."/>
            <person name="Ringwald M."/>
            <person name="Rost B."/>
            <person name="Ruan Y."/>
            <person name="Salzberg S.L."/>
            <person name="Sandelin A."/>
            <person name="Schneider C."/>
            <person name="Schoenbach C."/>
            <person name="Sekiguchi K."/>
            <person name="Semple C.A."/>
            <person name="Seno S."/>
            <person name="Sessa L."/>
            <person name="Sheng Y."/>
            <person name="Shibata Y."/>
            <person name="Shimada H."/>
            <person name="Shimada K."/>
            <person name="Silva D."/>
            <person name="Sinclair B."/>
            <person name="Sperling S."/>
            <person name="Stupka E."/>
            <person name="Sugiura K."/>
            <person name="Sultana R."/>
            <person name="Takenaka Y."/>
            <person name="Taki K."/>
            <person name="Tammoja K."/>
            <person name="Tan S.L."/>
            <person name="Tang S."/>
            <person name="Taylor M.S."/>
            <person name="Tegner J."/>
            <person name="Teichmann S.A."/>
            <person name="Ueda H.R."/>
            <person name="van Nimwegen E."/>
            <person name="Verardo R."/>
            <person name="Wei C.L."/>
            <person name="Yagi K."/>
            <person name="Yamanishi H."/>
            <person name="Zabarovsky E."/>
            <person name="Zhu S."/>
            <person name="Zimmer A."/>
            <person name="Hide W."/>
            <person name="Bult C."/>
            <person name="Grimmond S.M."/>
            <person name="Teasdale R.D."/>
            <person name="Liu E.T."/>
            <person name="Brusic V."/>
            <person name="Quackenbush J."/>
            <person name="Wahlestedt C."/>
            <person name="Mattick J.S."/>
            <person name="Hume D.A."/>
            <person name="Kai C."/>
            <person name="Sasaki D."/>
            <person name="Tomaru Y."/>
            <person name="Fukuda S."/>
            <person name="Kanamori-Katayama M."/>
            <person name="Suzuki M."/>
            <person name="Aoki J."/>
            <person name="Arakawa T."/>
            <person name="Iida J."/>
            <person name="Imamura K."/>
            <person name="Itoh M."/>
            <person name="Kato T."/>
            <person name="Kawaji H."/>
            <person name="Kawagashira N."/>
            <person name="Kawashima T."/>
            <person name="Kojima M."/>
            <person name="Kondo S."/>
            <person name="Konno H."/>
            <person name="Nakano K."/>
            <person name="Ninomiya N."/>
            <person name="Nishio T."/>
            <person name="Okada M."/>
            <person name="Plessy C."/>
            <person name="Shibata K."/>
            <person name="Shiraki T."/>
            <person name="Suzuki S."/>
            <person name="Tagami M."/>
            <person name="Waki K."/>
            <person name="Watahiki A."/>
            <person name="Okamura-Oho Y."/>
            <person name="Suzuki H."/>
            <person name="Kawai J."/>
            <person name="Hayashizaki Y."/>
        </authorList>
    </citation>
    <scope>NUCLEOTIDE SEQUENCE [LARGE SCALE MRNA]</scope>
    <source>
        <strain evidence="8">C57BL/6J</strain>
        <tissue evidence="8">Colon</tissue>
    </source>
</reference>
<reference evidence="7" key="2">
    <citation type="journal article" date="2004" name="Genome Res.">
        <title>The status, quality, and expansion of the NIH full-length cDNA project: the Mammalian Gene Collection (MGC).</title>
        <authorList>
            <consortium name="The MGC Project Team"/>
        </authorList>
    </citation>
    <scope>NUCLEOTIDE SEQUENCE [LARGE SCALE MRNA]</scope>
    <source>
        <strain evidence="7">C57BL/6NCr</strain>
        <tissue>Hematopoietic stem cell</tissue>
    </source>
</reference>
<reference key="3">
    <citation type="journal article" date="2007" name="Proc. Natl. Acad. Sci. U.S.A.">
        <title>Large-scale phosphorylation analysis of mouse liver.</title>
        <authorList>
            <person name="Villen J."/>
            <person name="Beausoleil S.A."/>
            <person name="Gerber S.A."/>
            <person name="Gygi S.P."/>
        </authorList>
    </citation>
    <scope>PHOSPHORYLATION [LARGE SCALE ANALYSIS] AT THR-667</scope>
    <scope>IDENTIFICATION BY MASS SPECTROMETRY [LARGE SCALE ANALYSIS]</scope>
    <source>
        <tissue>Liver</tissue>
    </source>
</reference>
<reference key="4">
    <citation type="journal article" date="2010" name="Cell">
        <title>A tissue-specific atlas of mouse protein phosphorylation and expression.</title>
        <authorList>
            <person name="Huttlin E.L."/>
            <person name="Jedrychowski M.P."/>
            <person name="Elias J.E."/>
            <person name="Goswami T."/>
            <person name="Rad R."/>
            <person name="Beausoleil S.A."/>
            <person name="Villen J."/>
            <person name="Haas W."/>
            <person name="Sowa M.E."/>
            <person name="Gygi S.P."/>
        </authorList>
    </citation>
    <scope>PHOSPHORYLATION [LARGE SCALE ANALYSIS] AT THR-667</scope>
    <scope>IDENTIFICATION BY MASS SPECTROMETRY [LARGE SCALE ANALYSIS]</scope>
    <source>
        <tissue>Kidney</tissue>
        <tissue>Liver</tissue>
    </source>
</reference>
<dbReference type="EC" id="2.3.2.27" evidence="2"/>
<dbReference type="EMBL" id="AK033506">
    <property type="protein sequence ID" value="BAC28327.1"/>
    <property type="molecule type" value="mRNA"/>
</dbReference>
<dbReference type="EMBL" id="BC052901">
    <property type="protein sequence ID" value="AAH52901.1"/>
    <property type="molecule type" value="mRNA"/>
</dbReference>
<dbReference type="CCDS" id="CCDS27494.1"/>
<dbReference type="RefSeq" id="NP_780435.1">
    <property type="nucleotide sequence ID" value="NM_175226.4"/>
</dbReference>
<dbReference type="SMR" id="Q7TMV1"/>
<dbReference type="BioGRID" id="217784">
    <property type="interactions" value="2"/>
</dbReference>
<dbReference type="FunCoup" id="Q7TMV1">
    <property type="interactions" value="3205"/>
</dbReference>
<dbReference type="STRING" id="10090.ENSMUSP00000046467"/>
<dbReference type="iPTMnet" id="Q7TMV1"/>
<dbReference type="PhosphoSitePlus" id="Q7TMV1"/>
<dbReference type="PaxDb" id="10090-ENSMUSP00000046467"/>
<dbReference type="PeptideAtlas" id="Q7TMV1"/>
<dbReference type="ProteomicsDB" id="300489"/>
<dbReference type="DNASU" id="75841"/>
<dbReference type="GeneID" id="75841"/>
<dbReference type="KEGG" id="mmu:75841"/>
<dbReference type="UCSC" id="uc007vtq.2">
    <property type="organism name" value="mouse"/>
</dbReference>
<dbReference type="AGR" id="MGI:1923091"/>
<dbReference type="CTD" id="11236"/>
<dbReference type="MGI" id="MGI:1923091">
    <property type="gene designation" value="Rnf139"/>
</dbReference>
<dbReference type="eggNOG" id="KOG0802">
    <property type="taxonomic scope" value="Eukaryota"/>
</dbReference>
<dbReference type="InParanoid" id="Q7TMV1"/>
<dbReference type="OrthoDB" id="4348522at2759"/>
<dbReference type="PhylomeDB" id="Q7TMV1"/>
<dbReference type="TreeFam" id="TF318635"/>
<dbReference type="UniPathway" id="UPA00143"/>
<dbReference type="BioGRID-ORCS" id="75841">
    <property type="hits" value="4 hits in 77 CRISPR screens"/>
</dbReference>
<dbReference type="ChiTaRS" id="Rnf139">
    <property type="organism name" value="mouse"/>
</dbReference>
<dbReference type="PRO" id="PR:Q7TMV1"/>
<dbReference type="Proteomes" id="UP000000589">
    <property type="component" value="Unplaced"/>
</dbReference>
<dbReference type="RNAct" id="Q7TMV1">
    <property type="molecule type" value="protein"/>
</dbReference>
<dbReference type="GO" id="GO:0005783">
    <property type="term" value="C:endoplasmic reticulum"/>
    <property type="evidence" value="ECO:0000250"/>
    <property type="project" value="UniProtKB"/>
</dbReference>
<dbReference type="GO" id="GO:0005789">
    <property type="term" value="C:endoplasmic reticulum membrane"/>
    <property type="evidence" value="ECO:0007669"/>
    <property type="project" value="UniProtKB-SubCell"/>
</dbReference>
<dbReference type="GO" id="GO:0016740">
    <property type="term" value="F:transferase activity"/>
    <property type="evidence" value="ECO:0007669"/>
    <property type="project" value="UniProtKB-KW"/>
</dbReference>
<dbReference type="GO" id="GO:0008270">
    <property type="term" value="F:zinc ion binding"/>
    <property type="evidence" value="ECO:0007669"/>
    <property type="project" value="UniProtKB-KW"/>
</dbReference>
<dbReference type="GO" id="GO:2000060">
    <property type="term" value="P:positive regulation of ubiquitin-dependent protein catabolic process"/>
    <property type="evidence" value="ECO:0000250"/>
    <property type="project" value="UniProtKB"/>
</dbReference>
<dbReference type="GO" id="GO:0031648">
    <property type="term" value="P:protein destabilization"/>
    <property type="evidence" value="ECO:0000250"/>
    <property type="project" value="UniProtKB"/>
</dbReference>
<dbReference type="GO" id="GO:0016567">
    <property type="term" value="P:protein ubiquitination"/>
    <property type="evidence" value="ECO:0000250"/>
    <property type="project" value="UniProtKB"/>
</dbReference>
<dbReference type="FunFam" id="3.30.40.10:FF:000166">
    <property type="entry name" value="E3 ubiquitin-protein ligase RNF139"/>
    <property type="match status" value="1"/>
</dbReference>
<dbReference type="Gene3D" id="3.30.40.10">
    <property type="entry name" value="Zinc/RING finger domain, C3HC4 (zinc finger)"/>
    <property type="match status" value="1"/>
</dbReference>
<dbReference type="InterPro" id="IPR050731">
    <property type="entry name" value="HRD1_E3_ubiq-ligases"/>
</dbReference>
<dbReference type="InterPro" id="IPR025754">
    <property type="entry name" value="TRC8_N_dom"/>
</dbReference>
<dbReference type="InterPro" id="IPR001841">
    <property type="entry name" value="Znf_RING"/>
</dbReference>
<dbReference type="InterPro" id="IPR011016">
    <property type="entry name" value="Znf_RING-CH"/>
</dbReference>
<dbReference type="InterPro" id="IPR013083">
    <property type="entry name" value="Znf_RING/FYVE/PHD"/>
</dbReference>
<dbReference type="PANTHER" id="PTHR22763:SF163">
    <property type="entry name" value="E3 UBIQUITIN-PROTEIN LIGASE RNF139"/>
    <property type="match status" value="1"/>
</dbReference>
<dbReference type="PANTHER" id="PTHR22763">
    <property type="entry name" value="RING ZINC FINGER PROTEIN"/>
    <property type="match status" value="1"/>
</dbReference>
<dbReference type="Pfam" id="PF13705">
    <property type="entry name" value="TRC8_N"/>
    <property type="match status" value="1"/>
</dbReference>
<dbReference type="Pfam" id="PF13639">
    <property type="entry name" value="zf-RING_2"/>
    <property type="match status" value="1"/>
</dbReference>
<dbReference type="SMART" id="SM00184">
    <property type="entry name" value="RING"/>
    <property type="match status" value="1"/>
</dbReference>
<dbReference type="SMART" id="SM00744">
    <property type="entry name" value="RINGv"/>
    <property type="match status" value="1"/>
</dbReference>
<dbReference type="SUPFAM" id="SSF57850">
    <property type="entry name" value="RING/U-box"/>
    <property type="match status" value="1"/>
</dbReference>
<dbReference type="PROSITE" id="PS50089">
    <property type="entry name" value="ZF_RING_2"/>
    <property type="match status" value="1"/>
</dbReference>
<keyword id="KW-0007">Acetylation</keyword>
<keyword id="KW-0256">Endoplasmic reticulum</keyword>
<keyword id="KW-0472">Membrane</keyword>
<keyword id="KW-0479">Metal-binding</keyword>
<keyword id="KW-0597">Phosphoprotein</keyword>
<keyword id="KW-0675">Receptor</keyword>
<keyword id="KW-1185">Reference proteome</keyword>
<keyword id="KW-0808">Transferase</keyword>
<keyword id="KW-0812">Transmembrane</keyword>
<keyword id="KW-1133">Transmembrane helix</keyword>
<keyword id="KW-0832">Ubl conjugation</keyword>
<keyword id="KW-0833">Ubl conjugation pathway</keyword>
<keyword id="KW-0862">Zinc</keyword>
<keyword id="KW-0863">Zinc-finger</keyword>
<sequence>MAAVGPPQQQVRMAQQQVWAALEVALRVPCLYIIDAIFNSYYDSSQSRFCIGLQIFLRLLGIVVSSIVLILSQRSLFKFYMYSSAFLLAATSVLVNYYAALHIDFYGAYNTSAFGIELLPRKGPSLWMALIVLQLTFGIGYVTLLQIQSIYSQLMILNILVPIIGLITELPLHIRETVVLMSSLILIFNTVLVLAVKLKWFYYSTRYVYLLVRHMYRIYGLQLLMEDTWKRIRFPDILRVFWLTRITTQATVLMYILRMANETESFFISWDDFWDVICNLIISGCDSTLTVLGMSAVISSIAHYLGLGILAFIGSTEEDDRRLGFVAPVLFFILALQTGLSGLRPEERLIRLSRNMCLLLTAVLHFIHGMTDPVLMSLSASHVSSFHRHFPVLFVSACLFILPVLLSYVLWHHYALNTWLFAVTAFCVELCLKVIVSLTVYTLFMIDGYYNVLWEKLDDYVYFVRSTGNIIEFIFGVVMFGNGAYTMMFESGSKIRACMMCLHAYFNIYLQVKNGWKTFMNRRTAVKKINSLPEIKGSHLQEIDDVCAICYHEFTTSARITPCNHYFHALCLRKWLYIQDTCPMCHQKVYIEDEIKDNSNASNNNGFIAPNENPNPEEALREDAAGSDRELNEDDSTDCDDDAQRERNGGIQHTGAAAAAAEFNDDTD</sequence>
<comment type="function">
    <text evidence="2">E3-ubiquitin ligase; acts as a negative regulator of cell proliferation through mechanisms involving G2/M arrest and cell death. Required for MHC class I ubiquitination in cells expressing the cytomegalovirus protein US2 before dislocation from the endoplasmic reticulum (ER). Affects SREBP processing by hindering the SREBP-SCAP complex translocation from the ER to the Golgi, thereby reducing SREBF2 target gene expression. Involved in the sterol-accelerated degradation of HMGCR. This is achieved through binding to INSIG1 and/or INSIG2 at the ER membrane. In addition, interaction of RNF139 with AUP1 facilitates interaction of RNF139 with ubiquitin-conjugating enzyme UBE2G2 and ubiquitin ligase AMFR, leading to ubiquitination of HMGCR. The ubiquitinated HMGCR is then released from the ER by the complex into the cytosol for subsequent destruction. Required for INSIG1 ubiquitination. May be required for EIF3 complex ubiquitination.</text>
</comment>
<comment type="catalytic activity">
    <reaction evidence="2">
        <text>S-ubiquitinyl-[E2 ubiquitin-conjugating enzyme]-L-cysteine + [acceptor protein]-L-lysine = [E2 ubiquitin-conjugating enzyme]-L-cysteine + N(6)-ubiquitinyl-[acceptor protein]-L-lysine.</text>
        <dbReference type="EC" id="2.3.2.27"/>
    </reaction>
</comment>
<comment type="pathway">
    <text evidence="2">Protein modification; protein ubiquitination.</text>
</comment>
<comment type="subunit">
    <text evidence="2">Interacts with VHL. Interacts with MHC class I and HM13. Component of SCAP-SREBP complex composed of SREBF2, SCAP and RNF139; the complex hampers the interaction between SCAP and SEC24B, thereby reducing SREBF2 proteolytic processing. Interacts with SREBF2 (via C-terminal domain). Interacts with SCAP; the interaction inhibits the interaction of SCAP with SEC24B and hampering the ER to Golgi transport of the SCAP-SREBP complex. Interacts with SEC24B. Interacts with INSIG1 and INSIG2. Interacts with EIF3F and EIF3H; the interaction leads to protein translation inhibitions in a ubiquitination-dependent manner. Interacts with XBP1 isoform 1; the interaction induces ubiquitination and degradation of XBP1 isoform 1. Interacts with AUP1, AMFR and UBE2G2; interaction with AUP1 facilitates interaction of RNF139 with ubiquitin-conjugating enzyme UBE2G2 and ubiquitin ligase AMFR/gp78, leading to sterol-induced ubiquitination of HMGCR and its subsequent proteasomal degradation.</text>
</comment>
<comment type="subcellular location">
    <subcellularLocation>
        <location evidence="2">Endoplasmic reticulum membrane</location>
        <topology evidence="2">Multi-pass membrane protein</topology>
    </subcellularLocation>
</comment>
<comment type="domain">
    <text evidence="1">The RING-type zinc finger domain may be essential for ubiquitin ligase activity.</text>
</comment>
<comment type="PTM">
    <text evidence="2">Autoubiquitinated. Ubiquitination is induced by sterol and leads to ist degradation via the ubiquitin-proteasome pathway.</text>
</comment>
<proteinExistence type="evidence at protein level"/>
<protein>
    <recommendedName>
        <fullName>E3 ubiquitin-protein ligase RNF139</fullName>
        <ecNumber evidence="2">2.3.2.27</ecNumber>
    </recommendedName>
    <alternativeName>
        <fullName>RING finger protein 139</fullName>
    </alternativeName>
    <alternativeName>
        <fullName evidence="6">RING-type E3 ubiquitin transferase RNF139</fullName>
    </alternativeName>
    <alternativeName>
        <fullName>Translocation in renal carcinoma on chromosome 8 protein</fullName>
    </alternativeName>
</protein>
<feature type="initiator methionine" description="Removed" evidence="2">
    <location>
        <position position="1"/>
    </location>
</feature>
<feature type="chain" id="PRO_0000056099" description="E3 ubiquitin-protein ligase RNF139">
    <location>
        <begin position="2"/>
        <end position="668"/>
    </location>
</feature>
<feature type="transmembrane region" description="Helical" evidence="3">
    <location>
        <begin position="51"/>
        <end position="71"/>
    </location>
</feature>
<feature type="transmembrane region" description="Helical" evidence="3">
    <location>
        <begin position="85"/>
        <end position="105"/>
    </location>
</feature>
<feature type="transmembrane region" description="Helical" evidence="3">
    <location>
        <begin position="125"/>
        <end position="145"/>
    </location>
</feature>
<feature type="transmembrane region" description="Helical" evidence="3">
    <location>
        <begin position="154"/>
        <end position="174"/>
    </location>
</feature>
<feature type="transmembrane region" description="Helical" evidence="3">
    <location>
        <begin position="178"/>
        <end position="198"/>
    </location>
</feature>
<feature type="transmembrane region" description="Helical" evidence="3">
    <location>
        <begin position="293"/>
        <end position="313"/>
    </location>
</feature>
<feature type="transmembrane region" description="Helical" evidence="3">
    <location>
        <begin position="323"/>
        <end position="343"/>
    </location>
</feature>
<feature type="transmembrane region" description="Helical" evidence="3">
    <location>
        <begin position="356"/>
        <end position="376"/>
    </location>
</feature>
<feature type="transmembrane region" description="Helical" evidence="3">
    <location>
        <begin position="390"/>
        <end position="410"/>
    </location>
</feature>
<feature type="transmembrane region" description="Helical" evidence="3">
    <location>
        <begin position="420"/>
        <end position="440"/>
    </location>
</feature>
<feature type="transmembrane region" description="Helical" evidence="3">
    <location>
        <begin position="470"/>
        <end position="490"/>
    </location>
</feature>
<feature type="zinc finger region" description="RING-type; atypical" evidence="4">
    <location>
        <begin position="547"/>
        <end position="586"/>
    </location>
</feature>
<feature type="region of interest" description="Disordered" evidence="5">
    <location>
        <begin position="602"/>
        <end position="668"/>
    </location>
</feature>
<feature type="compositionally biased region" description="Basic and acidic residues" evidence="5">
    <location>
        <begin position="618"/>
        <end position="630"/>
    </location>
</feature>
<feature type="compositionally biased region" description="Acidic residues" evidence="5">
    <location>
        <begin position="631"/>
        <end position="641"/>
    </location>
</feature>
<feature type="modified residue" description="N-acetylalanine" evidence="2">
    <location>
        <position position="2"/>
    </location>
</feature>
<feature type="modified residue" description="Phosphoserine" evidence="2">
    <location>
        <position position="636"/>
    </location>
</feature>
<feature type="modified residue" description="Phosphothreonine" evidence="2">
    <location>
        <position position="637"/>
    </location>
</feature>
<feature type="modified residue" description="Phosphothreonine" evidence="10 11">
    <location>
        <position position="667"/>
    </location>
</feature>
<feature type="sequence conflict" description="In Ref. 1; BAC28327." evidence="6" ref="1">
    <original>T</original>
    <variation>A</variation>
    <location>
        <position position="248"/>
    </location>
</feature>
<evidence type="ECO:0000250" key="1">
    <source>
        <dbReference type="UniProtKB" id="O75485"/>
    </source>
</evidence>
<evidence type="ECO:0000250" key="2">
    <source>
        <dbReference type="UniProtKB" id="Q8WU17"/>
    </source>
</evidence>
<evidence type="ECO:0000255" key="3"/>
<evidence type="ECO:0000255" key="4">
    <source>
        <dbReference type="PROSITE-ProRule" id="PRU00175"/>
    </source>
</evidence>
<evidence type="ECO:0000256" key="5">
    <source>
        <dbReference type="SAM" id="MobiDB-lite"/>
    </source>
</evidence>
<evidence type="ECO:0000305" key="6"/>
<evidence type="ECO:0000312" key="7">
    <source>
        <dbReference type="EMBL" id="AAH52901.1"/>
    </source>
</evidence>
<evidence type="ECO:0000312" key="8">
    <source>
        <dbReference type="EMBL" id="BAC28327.1"/>
    </source>
</evidence>
<evidence type="ECO:0000312" key="9">
    <source>
        <dbReference type="MGI" id="MGI:1923091"/>
    </source>
</evidence>
<evidence type="ECO:0007744" key="10">
    <source>
    </source>
</evidence>
<evidence type="ECO:0007744" key="11">
    <source>
    </source>
</evidence>
<accession>Q7TMV1</accession>
<accession>Q8BZU9</accession>
<name>RN139_MOUSE</name>
<organism>
    <name type="scientific">Mus musculus</name>
    <name type="common">Mouse</name>
    <dbReference type="NCBI Taxonomy" id="10090"/>
    <lineage>
        <taxon>Eukaryota</taxon>
        <taxon>Metazoa</taxon>
        <taxon>Chordata</taxon>
        <taxon>Craniata</taxon>
        <taxon>Vertebrata</taxon>
        <taxon>Euteleostomi</taxon>
        <taxon>Mammalia</taxon>
        <taxon>Eutheria</taxon>
        <taxon>Euarchontoglires</taxon>
        <taxon>Glires</taxon>
        <taxon>Rodentia</taxon>
        <taxon>Myomorpha</taxon>
        <taxon>Muroidea</taxon>
        <taxon>Muridae</taxon>
        <taxon>Murinae</taxon>
        <taxon>Mus</taxon>
        <taxon>Mus</taxon>
    </lineage>
</organism>